<protein>
    <recommendedName>
        <fullName evidence="4">Beta-glucosidase cel3A</fullName>
        <ecNumber evidence="3">3.2.1.21</ecNumber>
    </recommendedName>
    <alternativeName>
        <fullName evidence="5">Beta-D-glucoside glucohydrolase cel3A</fullName>
    </alternativeName>
    <alternativeName>
        <fullName evidence="5">Cellobiase cel3A</fullName>
    </alternativeName>
    <alternativeName>
        <fullName evidence="5">Gentiobiase cel3A</fullName>
    </alternativeName>
</protein>
<sequence length="765" mass="82814">MRWSSPTSSSLSLVALLLVAHVDAAERATSPPVHPSPPMKGAGVWSAAYASAKELVSQMTLEEMVNITGGFATTENVCAGNTGTVPRLGWPGLCLHDAGNGVRATDLVSAYPSGLHVGASWDKNLTYERGLYMGKEFKAKGVNVLLGPNAGALGRVPVAGRNWEGFTIDPYLSGILNAESIVGHQEAGVIATTKHFIGNEQELYRRPYFGVEAVSSNIDDKTVHELYMWPFMDSVKAGAASAMCSYQRVNNTYACMNSKLMNGLLKGELEFEGFIMLDWNAVHTVDSAEAGLDMVMPRGNWGTNLTAAINNGTTSKERLVDMATRIVAAWYFVGQDGDKFPKPGVGMYNLTQPHTPVEARVSESKPIIMEGAVAGHVLLKNEKNALPLKKPKMLSVYGYDATVPRTKNTDVLFTLGYYSSAEMAQAVLGTEQHFDQAAKGGTIISGGRAGANGPPYISDPLSAIQHRAADDDTWVNWDLDSGNPDVNSGSDACLVFINAIATEGWDRDGLHDDFSDGLVLNVASKCENTIVVIHNAGVRLVDQWVDHPNVTALVMAHLPGQDSGAALVKLLYGEEYFSGKLPYTIPHNESDYGHVYRSCAHDRAQDDKDPQCDFTEGVYIDYRDFDARNVTPRFEFGFGLGYTTFEFSELSIETSENLTAGVGSGSIWDHVAIVHATIKNNGSADGAEVAQLYLGIPNSPPKQLRGFEKVALSPGVSAPVRFELTRRDFSIWDVVAQKWVVQEGSYSVHVGASSRDIRLSDDIKI</sequence>
<reference key="1">
    <citation type="journal article" date="2005" name="Nature">
        <title>The genome sequence of the rice blast fungus Magnaporthe grisea.</title>
        <authorList>
            <person name="Dean R.A."/>
            <person name="Talbot N.J."/>
            <person name="Ebbole D.J."/>
            <person name="Farman M.L."/>
            <person name="Mitchell T.K."/>
            <person name="Orbach M.J."/>
            <person name="Thon M.R."/>
            <person name="Kulkarni R."/>
            <person name="Xu J.-R."/>
            <person name="Pan H."/>
            <person name="Read N.D."/>
            <person name="Lee Y.-H."/>
            <person name="Carbone I."/>
            <person name="Brown D."/>
            <person name="Oh Y.Y."/>
            <person name="Donofrio N."/>
            <person name="Jeong J.S."/>
            <person name="Soanes D.M."/>
            <person name="Djonovic S."/>
            <person name="Kolomiets E."/>
            <person name="Rehmeyer C."/>
            <person name="Li W."/>
            <person name="Harding M."/>
            <person name="Kim S."/>
            <person name="Lebrun M.-H."/>
            <person name="Bohnert H."/>
            <person name="Coughlan S."/>
            <person name="Butler J."/>
            <person name="Calvo S.E."/>
            <person name="Ma L.-J."/>
            <person name="Nicol R."/>
            <person name="Purcell S."/>
            <person name="Nusbaum C."/>
            <person name="Galagan J.E."/>
            <person name="Birren B.W."/>
        </authorList>
    </citation>
    <scope>NUCLEOTIDE SEQUENCE [LARGE SCALE GENOMIC DNA]</scope>
    <source>
        <strain>70-15 / ATCC MYA-4617 / FGSC 8958</strain>
    </source>
</reference>
<reference key="2">
    <citation type="journal article" date="2011" name="Appl. Microbiol. Biotechnol.">
        <title>Biochemical characterization of Magnaporthe oryzae beta-glucosidases for efficient beta-glucan hydrolysis.</title>
        <authorList>
            <person name="Takahashi M."/>
            <person name="Konishi T."/>
            <person name="Takeda T."/>
        </authorList>
    </citation>
    <scope>FUNCTION</scope>
    <scope>CATALYTIC ACTIVITY</scope>
    <scope>BIOPHYSICOCHEMICAL PROPERTIES</scope>
</reference>
<name>CEL3B_PYRO7</name>
<gene>
    <name evidence="4" type="primary">cel3B</name>
    <name type="ORF">MGG_0350</name>
</gene>
<accession>G4N7Z0</accession>
<evidence type="ECO:0000255" key="1"/>
<evidence type="ECO:0000255" key="2">
    <source>
        <dbReference type="PROSITE-ProRule" id="PRU00498"/>
    </source>
</evidence>
<evidence type="ECO:0000269" key="3">
    <source>
    </source>
</evidence>
<evidence type="ECO:0000303" key="4">
    <source>
    </source>
</evidence>
<evidence type="ECO:0000305" key="5"/>
<proteinExistence type="evidence at protein level"/>
<feature type="signal peptide" evidence="1">
    <location>
        <begin position="1"/>
        <end position="24"/>
    </location>
</feature>
<feature type="chain" id="PRO_0000432720" description="Beta-glucosidase cel3A" evidence="1">
    <location>
        <begin position="25"/>
        <end position="765"/>
    </location>
</feature>
<feature type="glycosylation site" description="N-linked (GlcNAc...) asparagine" evidence="2">
    <location>
        <position position="66"/>
    </location>
</feature>
<feature type="glycosylation site" description="N-linked (GlcNAc...) asparagine" evidence="2">
    <location>
        <position position="124"/>
    </location>
</feature>
<feature type="glycosylation site" description="N-linked (GlcNAc...) asparagine" evidence="2">
    <location>
        <position position="250"/>
    </location>
</feature>
<feature type="glycosylation site" description="N-linked (GlcNAc...) asparagine" evidence="2">
    <location>
        <position position="304"/>
    </location>
</feature>
<feature type="glycosylation site" description="N-linked (GlcNAc...) asparagine" evidence="2">
    <location>
        <position position="311"/>
    </location>
</feature>
<feature type="glycosylation site" description="N-linked (GlcNAc...) asparagine" evidence="2">
    <location>
        <position position="349"/>
    </location>
</feature>
<feature type="glycosylation site" description="N-linked (GlcNAc...) asparagine" evidence="2">
    <location>
        <position position="549"/>
    </location>
</feature>
<feature type="glycosylation site" description="N-linked (GlcNAc...) asparagine" evidence="2">
    <location>
        <position position="588"/>
    </location>
</feature>
<feature type="glycosylation site" description="N-linked (GlcNAc...) asparagine" evidence="2">
    <location>
        <position position="657"/>
    </location>
</feature>
<feature type="glycosylation site" description="N-linked (GlcNAc...) asparagine" evidence="2">
    <location>
        <position position="681"/>
    </location>
</feature>
<comment type="function">
    <text evidence="3">Beta-glucosidases are one of a number of cellulolytic enzymes involved in the degradation of cellulosic biomass. Catalyzes the last step releasing glucose from the inhibitory cellobiose. Shows higher activities on cellobiose and cellotriose but lower activities on laminarioligosaccharides and polymers.</text>
</comment>
<comment type="catalytic activity">
    <reaction evidence="3">
        <text>Hydrolysis of terminal, non-reducing beta-D-glucosyl residues with release of beta-D-glucose.</text>
        <dbReference type="EC" id="3.2.1.21"/>
    </reaction>
</comment>
<comment type="biophysicochemical properties">
    <kinetics>
        <KM evidence="3">27.93 mM for cellobiose</KM>
        <KM evidence="3">13.01 mM for cellohexaose</KM>
        <KM evidence="3">23.39 mM for laminaribiose</KM>
    </kinetics>
    <phDependence>
        <text evidence="3">Optimum pH is 5.0.</text>
    </phDependence>
    <temperatureDependence>
        <text evidence="3">Optimum temperature is 40-60 degrees Celsius.</text>
    </temperatureDependence>
</comment>
<comment type="pathway">
    <text evidence="3">Glycan metabolism; cellulose degradation.</text>
</comment>
<comment type="subcellular location">
    <subcellularLocation>
        <location evidence="5">Secreted</location>
    </subcellularLocation>
</comment>
<comment type="induction">
    <text evidence="3">The transcript levels are constant during infection.</text>
</comment>
<comment type="miscellaneous">
    <text evidence="5">The biological conversion of cellulose to glucose generally requires three types of hydrolytic enzymes: (1) Endoglucanases which cut internal beta-1,4-glucosidic bonds; (2) Exocellobiohydrolases that cut the disaccharide cellobiose from the non-reducing end of the cellulose polymer chain; (3) Beta-1,4-glucosidases which hydrolyze the cellobiose and other short cello-oligosaccharides to glucose.</text>
</comment>
<comment type="similarity">
    <text evidence="5">Belongs to the glycosyl hydrolase 3 family.</text>
</comment>
<organism>
    <name type="scientific">Pyricularia oryzae (strain 70-15 / ATCC MYA-4617 / FGSC 8958)</name>
    <name type="common">Rice blast fungus</name>
    <name type="synonym">Magnaporthe oryzae</name>
    <dbReference type="NCBI Taxonomy" id="242507"/>
    <lineage>
        <taxon>Eukaryota</taxon>
        <taxon>Fungi</taxon>
        <taxon>Dikarya</taxon>
        <taxon>Ascomycota</taxon>
        <taxon>Pezizomycotina</taxon>
        <taxon>Sordariomycetes</taxon>
        <taxon>Sordariomycetidae</taxon>
        <taxon>Magnaporthales</taxon>
        <taxon>Pyriculariaceae</taxon>
        <taxon>Pyricularia</taxon>
    </lineage>
</organism>
<keyword id="KW-0119">Carbohydrate metabolism</keyword>
<keyword id="KW-0136">Cellulose degradation</keyword>
<keyword id="KW-0325">Glycoprotein</keyword>
<keyword id="KW-0326">Glycosidase</keyword>
<keyword id="KW-0378">Hydrolase</keyword>
<keyword id="KW-0624">Polysaccharide degradation</keyword>
<keyword id="KW-1185">Reference proteome</keyword>
<keyword id="KW-0964">Secreted</keyword>
<keyword id="KW-0732">Signal</keyword>
<dbReference type="EC" id="3.2.1.21" evidence="3"/>
<dbReference type="EMBL" id="CM001234">
    <property type="protein sequence ID" value="EHA50092.1"/>
    <property type="molecule type" value="Genomic_DNA"/>
</dbReference>
<dbReference type="RefSeq" id="XP_003716411.1">
    <property type="nucleotide sequence ID" value="XM_003716363.1"/>
</dbReference>
<dbReference type="SMR" id="G4N7Z0"/>
<dbReference type="STRING" id="242507.G4N7Z0"/>
<dbReference type="CAZy" id="GH3">
    <property type="family name" value="Glycoside Hydrolase Family 3"/>
</dbReference>
<dbReference type="GlyCosmos" id="G4N7Z0">
    <property type="glycosylation" value="10 sites, No reported glycans"/>
</dbReference>
<dbReference type="EnsemblFungi" id="MGG_03508T0">
    <property type="protein sequence ID" value="MGG_03508T0"/>
    <property type="gene ID" value="MGG_03508"/>
</dbReference>
<dbReference type="KEGG" id="mgr:MGG_03508"/>
<dbReference type="VEuPathDB" id="FungiDB:MGG_03508"/>
<dbReference type="eggNOG" id="ENOG502SMNU">
    <property type="taxonomic scope" value="Eukaryota"/>
</dbReference>
<dbReference type="HOGENOM" id="CLU_004542_2_1_1"/>
<dbReference type="InParanoid" id="G4N7Z0"/>
<dbReference type="OMA" id="LDWNAQH"/>
<dbReference type="OrthoDB" id="416222at2759"/>
<dbReference type="UniPathway" id="UPA00696"/>
<dbReference type="Proteomes" id="UP000009058">
    <property type="component" value="Chromosome 4"/>
</dbReference>
<dbReference type="GO" id="GO:0005576">
    <property type="term" value="C:extracellular region"/>
    <property type="evidence" value="ECO:0007669"/>
    <property type="project" value="UniProtKB-SubCell"/>
</dbReference>
<dbReference type="GO" id="GO:0008422">
    <property type="term" value="F:beta-glucosidase activity"/>
    <property type="evidence" value="ECO:0007669"/>
    <property type="project" value="UniProtKB-EC"/>
</dbReference>
<dbReference type="GO" id="GO:0030245">
    <property type="term" value="P:cellulose catabolic process"/>
    <property type="evidence" value="ECO:0007669"/>
    <property type="project" value="UniProtKB-UniPathway"/>
</dbReference>
<dbReference type="FunFam" id="3.20.20.300:FF:000002">
    <property type="entry name" value="Probable beta-glucosidase"/>
    <property type="match status" value="1"/>
</dbReference>
<dbReference type="Gene3D" id="3.40.50.1700">
    <property type="entry name" value="Glycoside hydrolase family 3 C-terminal domain"/>
    <property type="match status" value="1"/>
</dbReference>
<dbReference type="Gene3D" id="3.20.20.300">
    <property type="entry name" value="Glycoside hydrolase, family 3, N-terminal domain"/>
    <property type="match status" value="1"/>
</dbReference>
<dbReference type="Gene3D" id="2.60.40.10">
    <property type="entry name" value="Immunoglobulins"/>
    <property type="match status" value="1"/>
</dbReference>
<dbReference type="InterPro" id="IPR050288">
    <property type="entry name" value="Cellulose_deg_GH3"/>
</dbReference>
<dbReference type="InterPro" id="IPR026891">
    <property type="entry name" value="Fn3-like"/>
</dbReference>
<dbReference type="InterPro" id="IPR002772">
    <property type="entry name" value="Glyco_hydro_3_C"/>
</dbReference>
<dbReference type="InterPro" id="IPR036881">
    <property type="entry name" value="Glyco_hydro_3_C_sf"/>
</dbReference>
<dbReference type="InterPro" id="IPR001764">
    <property type="entry name" value="Glyco_hydro_3_N"/>
</dbReference>
<dbReference type="InterPro" id="IPR036962">
    <property type="entry name" value="Glyco_hydro_3_N_sf"/>
</dbReference>
<dbReference type="InterPro" id="IPR017853">
    <property type="entry name" value="Glycoside_hydrolase_SF"/>
</dbReference>
<dbReference type="InterPro" id="IPR013783">
    <property type="entry name" value="Ig-like_fold"/>
</dbReference>
<dbReference type="PANTHER" id="PTHR42715">
    <property type="entry name" value="BETA-GLUCOSIDASE"/>
    <property type="match status" value="1"/>
</dbReference>
<dbReference type="PANTHER" id="PTHR42715:SF5">
    <property type="entry name" value="BETA-GLUCOSIDASE M-RELATED"/>
    <property type="match status" value="1"/>
</dbReference>
<dbReference type="Pfam" id="PF14310">
    <property type="entry name" value="Fn3-like"/>
    <property type="match status" value="1"/>
</dbReference>
<dbReference type="Pfam" id="PF00933">
    <property type="entry name" value="Glyco_hydro_3"/>
    <property type="match status" value="1"/>
</dbReference>
<dbReference type="Pfam" id="PF01915">
    <property type="entry name" value="Glyco_hydro_3_C"/>
    <property type="match status" value="1"/>
</dbReference>
<dbReference type="PRINTS" id="PR00133">
    <property type="entry name" value="GLHYDRLASE3"/>
</dbReference>
<dbReference type="SMART" id="SM01217">
    <property type="entry name" value="Fn3_like"/>
    <property type="match status" value="1"/>
</dbReference>
<dbReference type="SUPFAM" id="SSF51445">
    <property type="entry name" value="(Trans)glycosidases"/>
    <property type="match status" value="1"/>
</dbReference>
<dbReference type="SUPFAM" id="SSF52279">
    <property type="entry name" value="Beta-D-glucan exohydrolase, C-terminal domain"/>
    <property type="match status" value="1"/>
</dbReference>